<reference key="1">
    <citation type="journal article" date="2003" name="Nature">
        <title>Genome sequence of Bacillus cereus and comparative analysis with Bacillus anthracis.</title>
        <authorList>
            <person name="Ivanova N."/>
            <person name="Sorokin A."/>
            <person name="Anderson I."/>
            <person name="Galleron N."/>
            <person name="Candelon B."/>
            <person name="Kapatral V."/>
            <person name="Bhattacharyya A."/>
            <person name="Reznik G."/>
            <person name="Mikhailova N."/>
            <person name="Lapidus A."/>
            <person name="Chu L."/>
            <person name="Mazur M."/>
            <person name="Goltsman E."/>
            <person name="Larsen N."/>
            <person name="D'Souza M."/>
            <person name="Walunas T."/>
            <person name="Grechkin Y."/>
            <person name="Pusch G."/>
            <person name="Haselkorn R."/>
            <person name="Fonstein M."/>
            <person name="Ehrlich S.D."/>
            <person name="Overbeek R."/>
            <person name="Kyrpides N.C."/>
        </authorList>
    </citation>
    <scope>NUCLEOTIDE SEQUENCE [LARGE SCALE GENOMIC DNA]</scope>
    <source>
        <strain>ATCC 14579 / DSM 31 / CCUG 7414 / JCM 2152 / NBRC 15305 / NCIMB 9373 / NCTC 2599 / NRRL B-3711</strain>
    </source>
</reference>
<gene>
    <name evidence="1" type="primary">rplJ</name>
    <name type="ordered locus">BC_0119</name>
</gene>
<organism>
    <name type="scientific">Bacillus cereus (strain ATCC 14579 / DSM 31 / CCUG 7414 / JCM 2152 / NBRC 15305 / NCIMB 9373 / NCTC 2599 / NRRL B-3711)</name>
    <dbReference type="NCBI Taxonomy" id="226900"/>
    <lineage>
        <taxon>Bacteria</taxon>
        <taxon>Bacillati</taxon>
        <taxon>Bacillota</taxon>
        <taxon>Bacilli</taxon>
        <taxon>Bacillales</taxon>
        <taxon>Bacillaceae</taxon>
        <taxon>Bacillus</taxon>
        <taxon>Bacillus cereus group</taxon>
    </lineage>
</organism>
<dbReference type="EMBL" id="AE016877">
    <property type="protein sequence ID" value="AAP07201.1"/>
    <property type="molecule type" value="Genomic_DNA"/>
</dbReference>
<dbReference type="RefSeq" id="NP_830000.1">
    <property type="nucleotide sequence ID" value="NC_004722.1"/>
</dbReference>
<dbReference type="RefSeq" id="WP_000048982.1">
    <property type="nucleotide sequence ID" value="NC_004722.1"/>
</dbReference>
<dbReference type="SMR" id="Q81J51"/>
<dbReference type="STRING" id="226900.BC_0119"/>
<dbReference type="MetOSite" id="Q81J51"/>
<dbReference type="KEGG" id="bce:BC0119"/>
<dbReference type="PATRIC" id="fig|226900.8.peg.121"/>
<dbReference type="HOGENOM" id="CLU_092227_2_0_9"/>
<dbReference type="OrthoDB" id="9808307at2"/>
<dbReference type="Proteomes" id="UP000001417">
    <property type="component" value="Chromosome"/>
</dbReference>
<dbReference type="GO" id="GO:0022625">
    <property type="term" value="C:cytosolic large ribosomal subunit"/>
    <property type="evidence" value="ECO:0000318"/>
    <property type="project" value="GO_Central"/>
</dbReference>
<dbReference type="GO" id="GO:0070180">
    <property type="term" value="F:large ribosomal subunit rRNA binding"/>
    <property type="evidence" value="ECO:0007669"/>
    <property type="project" value="UniProtKB-UniRule"/>
</dbReference>
<dbReference type="GO" id="GO:0003735">
    <property type="term" value="F:structural constituent of ribosome"/>
    <property type="evidence" value="ECO:0000318"/>
    <property type="project" value="GO_Central"/>
</dbReference>
<dbReference type="GO" id="GO:0006412">
    <property type="term" value="P:translation"/>
    <property type="evidence" value="ECO:0000318"/>
    <property type="project" value="GO_Central"/>
</dbReference>
<dbReference type="CDD" id="cd05797">
    <property type="entry name" value="Ribosomal_L10"/>
    <property type="match status" value="1"/>
</dbReference>
<dbReference type="FunFam" id="3.30.70.1730:FF:000001">
    <property type="entry name" value="50S ribosomal protein L10"/>
    <property type="match status" value="1"/>
</dbReference>
<dbReference type="Gene3D" id="3.30.70.1730">
    <property type="match status" value="1"/>
</dbReference>
<dbReference type="Gene3D" id="6.10.250.290">
    <property type="match status" value="1"/>
</dbReference>
<dbReference type="HAMAP" id="MF_00362">
    <property type="entry name" value="Ribosomal_uL10"/>
    <property type="match status" value="1"/>
</dbReference>
<dbReference type="InterPro" id="IPR001790">
    <property type="entry name" value="Ribosomal_uL10"/>
</dbReference>
<dbReference type="InterPro" id="IPR043141">
    <property type="entry name" value="Ribosomal_uL10-like_sf"/>
</dbReference>
<dbReference type="InterPro" id="IPR022973">
    <property type="entry name" value="Ribosomal_uL10_bac"/>
</dbReference>
<dbReference type="InterPro" id="IPR047865">
    <property type="entry name" value="Ribosomal_uL10_bac_type"/>
</dbReference>
<dbReference type="InterPro" id="IPR002363">
    <property type="entry name" value="Ribosomal_uL10_CS_bac"/>
</dbReference>
<dbReference type="NCBIfam" id="NF000955">
    <property type="entry name" value="PRK00099.1-1"/>
    <property type="match status" value="1"/>
</dbReference>
<dbReference type="PANTHER" id="PTHR11560">
    <property type="entry name" value="39S RIBOSOMAL PROTEIN L10, MITOCHONDRIAL"/>
    <property type="match status" value="1"/>
</dbReference>
<dbReference type="Pfam" id="PF00466">
    <property type="entry name" value="Ribosomal_L10"/>
    <property type="match status" value="1"/>
</dbReference>
<dbReference type="SUPFAM" id="SSF160369">
    <property type="entry name" value="Ribosomal protein L10-like"/>
    <property type="match status" value="1"/>
</dbReference>
<dbReference type="PROSITE" id="PS01109">
    <property type="entry name" value="RIBOSOMAL_L10"/>
    <property type="match status" value="1"/>
</dbReference>
<name>RL10_BACCR</name>
<evidence type="ECO:0000255" key="1">
    <source>
        <dbReference type="HAMAP-Rule" id="MF_00362"/>
    </source>
</evidence>
<evidence type="ECO:0000305" key="2"/>
<sequence length="166" mass="18055">MSKVMETKQQVVTEIADKLRASKSTIVVDYRGLTVSEATELRKQLREAGVEFKVYKNSLTRRAAESAEMAELNEFLTGPNAIAFSNEDVVAPAKVLNDFAKDHEALEIKAGVIEGKLVTLDEVKAIATLPSREGLLSMLLSVLQAPIRNLALATKAVADQKEEQGA</sequence>
<accession>Q81J51</accession>
<keyword id="KW-1185">Reference proteome</keyword>
<keyword id="KW-0687">Ribonucleoprotein</keyword>
<keyword id="KW-0689">Ribosomal protein</keyword>
<keyword id="KW-0694">RNA-binding</keyword>
<keyword id="KW-0699">rRNA-binding</keyword>
<proteinExistence type="inferred from homology"/>
<feature type="chain" id="PRO_0000154583" description="Large ribosomal subunit protein uL10">
    <location>
        <begin position="1"/>
        <end position="166"/>
    </location>
</feature>
<comment type="function">
    <text evidence="1">Forms part of the ribosomal stalk, playing a central role in the interaction of the ribosome with GTP-bound translation factors.</text>
</comment>
<comment type="subunit">
    <text evidence="1">Part of the ribosomal stalk of the 50S ribosomal subunit. The N-terminus interacts with L11 and the large rRNA to form the base of the stalk. The C-terminus forms an elongated spine to which L12 dimers bind in a sequential fashion forming a multimeric L10(L12)X complex.</text>
</comment>
<comment type="similarity">
    <text evidence="1">Belongs to the universal ribosomal protein uL10 family.</text>
</comment>
<protein>
    <recommendedName>
        <fullName evidence="1">Large ribosomal subunit protein uL10</fullName>
    </recommendedName>
    <alternativeName>
        <fullName evidence="2">50S ribosomal protein L10</fullName>
    </alternativeName>
</protein>